<dbReference type="EMBL" id="CP000034">
    <property type="protein sequence ID" value="ABB60418.1"/>
    <property type="molecule type" value="Genomic_DNA"/>
</dbReference>
<dbReference type="RefSeq" id="WP_000818114.1">
    <property type="nucleotide sequence ID" value="NC_007606.1"/>
</dbReference>
<dbReference type="RefSeq" id="YP_401907.1">
    <property type="nucleotide sequence ID" value="NC_007606.1"/>
</dbReference>
<dbReference type="SMR" id="Q32JT9"/>
<dbReference type="STRING" id="300267.SDY_0186"/>
<dbReference type="EnsemblBacteria" id="ABB60418">
    <property type="protein sequence ID" value="ABB60418"/>
    <property type="gene ID" value="SDY_0186"/>
</dbReference>
<dbReference type="GeneID" id="93777255"/>
<dbReference type="KEGG" id="sdy:SDY_0186"/>
<dbReference type="PATRIC" id="fig|300267.13.peg.216"/>
<dbReference type="HOGENOM" id="CLU_047155_0_2_6"/>
<dbReference type="Proteomes" id="UP000002716">
    <property type="component" value="Chromosome"/>
</dbReference>
<dbReference type="GO" id="GO:0005737">
    <property type="term" value="C:cytoplasm"/>
    <property type="evidence" value="ECO:0007669"/>
    <property type="project" value="UniProtKB-SubCell"/>
</dbReference>
<dbReference type="GO" id="GO:0003746">
    <property type="term" value="F:translation elongation factor activity"/>
    <property type="evidence" value="ECO:0007669"/>
    <property type="project" value="UniProtKB-UniRule"/>
</dbReference>
<dbReference type="CDD" id="cd14275">
    <property type="entry name" value="UBA_EF-Ts"/>
    <property type="match status" value="1"/>
</dbReference>
<dbReference type="FunFam" id="1.10.286.20:FF:000001">
    <property type="entry name" value="Elongation factor Ts"/>
    <property type="match status" value="1"/>
</dbReference>
<dbReference type="FunFam" id="1.10.8.10:FF:000001">
    <property type="entry name" value="Elongation factor Ts"/>
    <property type="match status" value="1"/>
</dbReference>
<dbReference type="FunFam" id="3.30.479.20:FF:000001">
    <property type="entry name" value="Elongation factor Ts"/>
    <property type="match status" value="1"/>
</dbReference>
<dbReference type="Gene3D" id="1.10.286.20">
    <property type="match status" value="1"/>
</dbReference>
<dbReference type="Gene3D" id="1.10.8.10">
    <property type="entry name" value="DNA helicase RuvA subunit, C-terminal domain"/>
    <property type="match status" value="1"/>
</dbReference>
<dbReference type="Gene3D" id="3.30.479.20">
    <property type="entry name" value="Elongation factor Ts, dimerisation domain"/>
    <property type="match status" value="2"/>
</dbReference>
<dbReference type="HAMAP" id="MF_00050">
    <property type="entry name" value="EF_Ts"/>
    <property type="match status" value="1"/>
</dbReference>
<dbReference type="InterPro" id="IPR036402">
    <property type="entry name" value="EF-Ts_dimer_sf"/>
</dbReference>
<dbReference type="InterPro" id="IPR001816">
    <property type="entry name" value="Transl_elong_EFTs/EF1B"/>
</dbReference>
<dbReference type="InterPro" id="IPR014039">
    <property type="entry name" value="Transl_elong_EFTs/EF1B_dimer"/>
</dbReference>
<dbReference type="InterPro" id="IPR018101">
    <property type="entry name" value="Transl_elong_Ts_CS"/>
</dbReference>
<dbReference type="InterPro" id="IPR009060">
    <property type="entry name" value="UBA-like_sf"/>
</dbReference>
<dbReference type="NCBIfam" id="TIGR00116">
    <property type="entry name" value="tsf"/>
    <property type="match status" value="1"/>
</dbReference>
<dbReference type="PANTHER" id="PTHR11741">
    <property type="entry name" value="ELONGATION FACTOR TS"/>
    <property type="match status" value="1"/>
</dbReference>
<dbReference type="PANTHER" id="PTHR11741:SF0">
    <property type="entry name" value="ELONGATION FACTOR TS, MITOCHONDRIAL"/>
    <property type="match status" value="1"/>
</dbReference>
<dbReference type="Pfam" id="PF00889">
    <property type="entry name" value="EF_TS"/>
    <property type="match status" value="1"/>
</dbReference>
<dbReference type="SUPFAM" id="SSF54713">
    <property type="entry name" value="Elongation factor Ts (EF-Ts), dimerisation domain"/>
    <property type="match status" value="2"/>
</dbReference>
<dbReference type="SUPFAM" id="SSF46934">
    <property type="entry name" value="UBA-like"/>
    <property type="match status" value="1"/>
</dbReference>
<dbReference type="PROSITE" id="PS01126">
    <property type="entry name" value="EF_TS_1"/>
    <property type="match status" value="1"/>
</dbReference>
<dbReference type="PROSITE" id="PS01127">
    <property type="entry name" value="EF_TS_2"/>
    <property type="match status" value="1"/>
</dbReference>
<reference key="1">
    <citation type="journal article" date="2005" name="Nucleic Acids Res.">
        <title>Genome dynamics and diversity of Shigella species, the etiologic agents of bacillary dysentery.</title>
        <authorList>
            <person name="Yang F."/>
            <person name="Yang J."/>
            <person name="Zhang X."/>
            <person name="Chen L."/>
            <person name="Jiang Y."/>
            <person name="Yan Y."/>
            <person name="Tang X."/>
            <person name="Wang J."/>
            <person name="Xiong Z."/>
            <person name="Dong J."/>
            <person name="Xue Y."/>
            <person name="Zhu Y."/>
            <person name="Xu X."/>
            <person name="Sun L."/>
            <person name="Chen S."/>
            <person name="Nie H."/>
            <person name="Peng J."/>
            <person name="Xu J."/>
            <person name="Wang Y."/>
            <person name="Yuan Z."/>
            <person name="Wen Y."/>
            <person name="Yao Z."/>
            <person name="Shen Y."/>
            <person name="Qiang B."/>
            <person name="Hou Y."/>
            <person name="Yu J."/>
            <person name="Jin Q."/>
        </authorList>
    </citation>
    <scope>NUCLEOTIDE SEQUENCE [LARGE SCALE GENOMIC DNA]</scope>
    <source>
        <strain>Sd197</strain>
    </source>
</reference>
<accession>Q32JT9</accession>
<protein>
    <recommendedName>
        <fullName evidence="1">Elongation factor Ts</fullName>
        <shortName evidence="1">EF-Ts</shortName>
    </recommendedName>
</protein>
<proteinExistence type="inferred from homology"/>
<gene>
    <name evidence="1" type="primary">tsf</name>
    <name type="ordered locus">SDY_0186</name>
</gene>
<sequence length="283" mass="30423">MAEITASLVKELRERTGAGMMDCKKALTEANGDIELAIENMRKSGAIKAAKKAGNVAADGVIKTKIDGNYGIILEVNCQTDFVAKDAGFQAFADKVLDAAVAGKITDVEVLKAQFEEERVALVAKIGENINIRRVAALEGDVLGSYQHGARIGVLVAAKGADEELVKHIAMHVAASKPEFIKPEDVSAEVVEKEYQVQLDIAMQSGKPKEIAEKMVEGRMKKFTGEVSLTGQPFVMEPSKTVGQLLKEHNAEVTGFIRFEVGEGIEKVETDFAAEVAAMSKQS</sequence>
<name>EFTS_SHIDS</name>
<feature type="chain" id="PRO_0000241528" description="Elongation factor Ts">
    <location>
        <begin position="1"/>
        <end position="283"/>
    </location>
</feature>
<feature type="region of interest" description="Involved in Mg(2+) ion dislocation from EF-Tu" evidence="1">
    <location>
        <begin position="80"/>
        <end position="83"/>
    </location>
</feature>
<keyword id="KW-0963">Cytoplasm</keyword>
<keyword id="KW-0251">Elongation factor</keyword>
<keyword id="KW-0648">Protein biosynthesis</keyword>
<keyword id="KW-1185">Reference proteome</keyword>
<comment type="function">
    <text evidence="1">Associates with the EF-Tu.GDP complex and induces the exchange of GDP to GTP. It remains bound to the aminoacyl-tRNA.EF-Tu.GTP complex up to the GTP hydrolysis stage on the ribosome.</text>
</comment>
<comment type="subcellular location">
    <subcellularLocation>
        <location evidence="1">Cytoplasm</location>
    </subcellularLocation>
</comment>
<comment type="similarity">
    <text evidence="1">Belongs to the EF-Ts family.</text>
</comment>
<organism>
    <name type="scientific">Shigella dysenteriae serotype 1 (strain Sd197)</name>
    <dbReference type="NCBI Taxonomy" id="300267"/>
    <lineage>
        <taxon>Bacteria</taxon>
        <taxon>Pseudomonadati</taxon>
        <taxon>Pseudomonadota</taxon>
        <taxon>Gammaproteobacteria</taxon>
        <taxon>Enterobacterales</taxon>
        <taxon>Enterobacteriaceae</taxon>
        <taxon>Shigella</taxon>
    </lineage>
</organism>
<evidence type="ECO:0000255" key="1">
    <source>
        <dbReference type="HAMAP-Rule" id="MF_00050"/>
    </source>
</evidence>